<evidence type="ECO:0000255" key="1">
    <source>
        <dbReference type="HAMAP-Rule" id="MF_01897"/>
    </source>
</evidence>
<evidence type="ECO:0000255" key="2">
    <source>
        <dbReference type="PROSITE-ProRule" id="PRU01384"/>
    </source>
</evidence>
<evidence type="ECO:0000256" key="3">
    <source>
        <dbReference type="SAM" id="MobiDB-lite"/>
    </source>
</evidence>
<name>GYRA_STAAW</name>
<gene>
    <name evidence="1" type="primary">gyrA</name>
    <name type="ordered locus">MW0006</name>
</gene>
<sequence>MAELPQSRINERNITSEMRESFLDYAMSVIVARALPDVRDGLKPVHRRILYGLNEQGMTPDKSYKKSARIVGDVMGKYHPHGDSSIYEAMVRMAQDFSYRYPLVDGQGNFGSMDGDGAAAMRYTEARMTKITLELLRDINKDTIDFIDNYDGNEREPSVLPARFPNLLANGASGIAVGMATNIPPHNLTELINGVLSLSKNPDISIAELMEDIEGPDFPTAGLILGKSGIRRAYETGRGSIQMRSRAVIEERGGGRQRIVVTEIPFQVNKARMIEKIAELVRDKKIDGITDLRDETSLRTGVRVVIDVRKDANASVILNNLYKQTPLQTSFGVNMIALVNGRPKLINLKEALVHYLEHQKTVVRRRTQYNLRKAKDRAHILEGLRIALDHIDEIISTIRESDTDKVAMESLQQRFKLSEKQAQAILDMRLRRLTGLERDKIEAEYNELLNYISELEAILADEEVLLQLVRDELTEIRDRFGDDRRTEIQLGGFEDLEDEDLIPEEQIVITLSHNNYIKRLPVSTYRAQNRGGRGVQGMNTLEEDFVSQLVTLSTHDHVLFFTNKGRVYKLKGYEVPELSRQSKGIPVVNAIELENDEVISTMIAVKDLESEDNFLVFATKRGVVKRSALSNFSRINRNGKIAISFREDDELIAVRLTSGQEDILIGTSHASLIRFPESTLRPLGRTATGVKGITLREGDEVVGLDVAHANSVDEVLVVTENGYGKRTPVNDYRLSNRGGKGIKTATITERNGNVVCITTVTGEEDLMIVTNAGVIIRLDVADISQNGRAAQGVRLIRLGDDQFVSTVAKVKEDAEDETNEDEQSTSTVSEDGTEQQREAVVNDETPGNAIHTEVIDSEENDEDGRIEVRQDFMDRVEEDIQQSSDEE</sequence>
<feature type="chain" id="PRO_0000145257" description="DNA gyrase subunit A">
    <location>
        <begin position="1"/>
        <end position="887"/>
    </location>
</feature>
<feature type="domain" description="Topo IIA-type catalytic" evidence="2">
    <location>
        <begin position="35"/>
        <end position="501"/>
    </location>
</feature>
<feature type="region of interest" description="Disordered" evidence="3">
    <location>
        <begin position="811"/>
        <end position="865"/>
    </location>
</feature>
<feature type="short sequence motif" description="GyrA-box" evidence="1">
    <location>
        <begin position="528"/>
        <end position="534"/>
    </location>
</feature>
<feature type="compositionally biased region" description="Acidic residues" evidence="3">
    <location>
        <begin position="813"/>
        <end position="823"/>
    </location>
</feature>
<feature type="active site" description="O-(5'-phospho-DNA)-tyrosine intermediate" evidence="1">
    <location>
        <position position="123"/>
    </location>
</feature>
<reference key="1">
    <citation type="journal article" date="2002" name="Lancet">
        <title>Genome and virulence determinants of high virulence community-acquired MRSA.</title>
        <authorList>
            <person name="Baba T."/>
            <person name="Takeuchi F."/>
            <person name="Kuroda M."/>
            <person name="Yuzawa H."/>
            <person name="Aoki K."/>
            <person name="Oguchi A."/>
            <person name="Nagai Y."/>
            <person name="Iwama N."/>
            <person name="Asano K."/>
            <person name="Naimi T."/>
            <person name="Kuroda H."/>
            <person name="Cui L."/>
            <person name="Yamamoto K."/>
            <person name="Hiramatsu K."/>
        </authorList>
    </citation>
    <scope>NUCLEOTIDE SEQUENCE [LARGE SCALE GENOMIC DNA]</scope>
    <source>
        <strain>MW2</strain>
    </source>
</reference>
<dbReference type="EC" id="5.6.2.2" evidence="1"/>
<dbReference type="EMBL" id="BA000033">
    <property type="protein sequence ID" value="BAB93871.1"/>
    <property type="molecule type" value="Genomic_DNA"/>
</dbReference>
<dbReference type="RefSeq" id="WP_000819084.1">
    <property type="nucleotide sequence ID" value="NC_003923.1"/>
</dbReference>
<dbReference type="SMR" id="Q8NKW8"/>
<dbReference type="KEGG" id="sam:MW0006"/>
<dbReference type="HOGENOM" id="CLU_002977_6_1_9"/>
<dbReference type="GO" id="GO:0005694">
    <property type="term" value="C:chromosome"/>
    <property type="evidence" value="ECO:0007669"/>
    <property type="project" value="InterPro"/>
</dbReference>
<dbReference type="GO" id="GO:0005737">
    <property type="term" value="C:cytoplasm"/>
    <property type="evidence" value="ECO:0007669"/>
    <property type="project" value="UniProtKB-SubCell"/>
</dbReference>
<dbReference type="GO" id="GO:0009330">
    <property type="term" value="C:DNA topoisomerase type II (double strand cut, ATP-hydrolyzing) complex"/>
    <property type="evidence" value="ECO:0007669"/>
    <property type="project" value="TreeGrafter"/>
</dbReference>
<dbReference type="GO" id="GO:0005524">
    <property type="term" value="F:ATP binding"/>
    <property type="evidence" value="ECO:0007669"/>
    <property type="project" value="UniProtKB-UniRule"/>
</dbReference>
<dbReference type="GO" id="GO:0003677">
    <property type="term" value="F:DNA binding"/>
    <property type="evidence" value="ECO:0007669"/>
    <property type="project" value="UniProtKB-UniRule"/>
</dbReference>
<dbReference type="GO" id="GO:0034335">
    <property type="term" value="F:DNA negative supercoiling activity"/>
    <property type="evidence" value="ECO:0007669"/>
    <property type="project" value="UniProtKB-ARBA"/>
</dbReference>
<dbReference type="GO" id="GO:0006265">
    <property type="term" value="P:DNA topological change"/>
    <property type="evidence" value="ECO:0007669"/>
    <property type="project" value="UniProtKB-UniRule"/>
</dbReference>
<dbReference type="GO" id="GO:0006261">
    <property type="term" value="P:DNA-templated DNA replication"/>
    <property type="evidence" value="ECO:0007669"/>
    <property type="project" value="UniProtKB-UniRule"/>
</dbReference>
<dbReference type="GO" id="GO:0046677">
    <property type="term" value="P:response to antibiotic"/>
    <property type="evidence" value="ECO:0007669"/>
    <property type="project" value="UniProtKB-KW"/>
</dbReference>
<dbReference type="CDD" id="cd00187">
    <property type="entry name" value="TOP4c"/>
    <property type="match status" value="1"/>
</dbReference>
<dbReference type="FunFam" id="1.10.268.10:FF:000001">
    <property type="entry name" value="DNA gyrase subunit A"/>
    <property type="match status" value="1"/>
</dbReference>
<dbReference type="FunFam" id="2.120.10.90:FF:000004">
    <property type="entry name" value="DNA gyrase subunit A"/>
    <property type="match status" value="1"/>
</dbReference>
<dbReference type="FunFam" id="3.30.1360.40:FF:000002">
    <property type="entry name" value="DNA gyrase subunit A"/>
    <property type="match status" value="1"/>
</dbReference>
<dbReference type="FunFam" id="3.90.199.10:FF:000001">
    <property type="entry name" value="DNA gyrase subunit A"/>
    <property type="match status" value="1"/>
</dbReference>
<dbReference type="Gene3D" id="3.30.1360.40">
    <property type="match status" value="1"/>
</dbReference>
<dbReference type="Gene3D" id="2.120.10.90">
    <property type="entry name" value="DNA gyrase/topoisomerase IV, subunit A, C-terminal"/>
    <property type="match status" value="1"/>
</dbReference>
<dbReference type="Gene3D" id="3.90.199.10">
    <property type="entry name" value="Topoisomerase II, domain 5"/>
    <property type="match status" value="1"/>
</dbReference>
<dbReference type="Gene3D" id="1.10.268.10">
    <property type="entry name" value="Topoisomerase, domain 3"/>
    <property type="match status" value="1"/>
</dbReference>
<dbReference type="HAMAP" id="MF_01897">
    <property type="entry name" value="GyrA"/>
    <property type="match status" value="1"/>
</dbReference>
<dbReference type="InterPro" id="IPR005743">
    <property type="entry name" value="GyrA"/>
</dbReference>
<dbReference type="InterPro" id="IPR006691">
    <property type="entry name" value="GyrA/parC_rep"/>
</dbReference>
<dbReference type="InterPro" id="IPR035516">
    <property type="entry name" value="Gyrase/topoIV_suA_C"/>
</dbReference>
<dbReference type="InterPro" id="IPR013760">
    <property type="entry name" value="Topo_IIA-like_dom_sf"/>
</dbReference>
<dbReference type="InterPro" id="IPR013758">
    <property type="entry name" value="Topo_IIA_A/C_ab"/>
</dbReference>
<dbReference type="InterPro" id="IPR013757">
    <property type="entry name" value="Topo_IIA_A_a_sf"/>
</dbReference>
<dbReference type="InterPro" id="IPR002205">
    <property type="entry name" value="Topo_IIA_dom_A"/>
</dbReference>
<dbReference type="InterPro" id="IPR050220">
    <property type="entry name" value="Type_II_DNA_Topoisomerases"/>
</dbReference>
<dbReference type="NCBIfam" id="TIGR01063">
    <property type="entry name" value="gyrA"/>
    <property type="match status" value="1"/>
</dbReference>
<dbReference type="NCBIfam" id="NF004043">
    <property type="entry name" value="PRK05560.1"/>
    <property type="match status" value="1"/>
</dbReference>
<dbReference type="NCBIfam" id="NF004044">
    <property type="entry name" value="PRK05561.1"/>
    <property type="match status" value="1"/>
</dbReference>
<dbReference type="PANTHER" id="PTHR43493:SF5">
    <property type="entry name" value="DNA GYRASE SUBUNIT A, CHLOROPLASTIC_MITOCHONDRIAL"/>
    <property type="match status" value="1"/>
</dbReference>
<dbReference type="PANTHER" id="PTHR43493">
    <property type="entry name" value="DNA GYRASE/TOPOISOMERASE SUBUNIT A"/>
    <property type="match status" value="1"/>
</dbReference>
<dbReference type="Pfam" id="PF03989">
    <property type="entry name" value="DNA_gyraseA_C"/>
    <property type="match status" value="6"/>
</dbReference>
<dbReference type="Pfam" id="PF00521">
    <property type="entry name" value="DNA_topoisoIV"/>
    <property type="match status" value="1"/>
</dbReference>
<dbReference type="SMART" id="SM00434">
    <property type="entry name" value="TOP4c"/>
    <property type="match status" value="1"/>
</dbReference>
<dbReference type="SUPFAM" id="SSF101904">
    <property type="entry name" value="GyrA/ParC C-terminal domain-like"/>
    <property type="match status" value="1"/>
</dbReference>
<dbReference type="SUPFAM" id="SSF56719">
    <property type="entry name" value="Type II DNA topoisomerase"/>
    <property type="match status" value="1"/>
</dbReference>
<dbReference type="PROSITE" id="PS52040">
    <property type="entry name" value="TOPO_IIA"/>
    <property type="match status" value="1"/>
</dbReference>
<protein>
    <recommendedName>
        <fullName evidence="1">DNA gyrase subunit A</fullName>
        <ecNumber evidence="1">5.6.2.2</ecNumber>
    </recommendedName>
</protein>
<comment type="function">
    <text evidence="1">A type II topoisomerase that negatively supercoils closed circular double-stranded (ds) DNA in an ATP-dependent manner to modulate DNA topology and maintain chromosomes in an underwound state. Negative supercoiling favors strand separation, and DNA replication, transcription, recombination and repair, all of which involve strand separation. Also able to catalyze the interconversion of other topological isomers of dsDNA rings, including catenanes and knotted rings. Type II topoisomerases break and join 2 DNA strands simultaneously in an ATP-dependent manner.</text>
</comment>
<comment type="catalytic activity">
    <reaction evidence="1">
        <text>ATP-dependent breakage, passage and rejoining of double-stranded DNA.</text>
        <dbReference type="EC" id="5.6.2.2"/>
    </reaction>
</comment>
<comment type="subunit">
    <text evidence="1">Heterotetramer, composed of two GyrA and two GyrB chains. In the heterotetramer, GyrA contains the active site tyrosine that forms a transient covalent intermediate with DNA, while GyrB binds cofactors and catalyzes ATP hydrolysis.</text>
</comment>
<comment type="subcellular location">
    <subcellularLocation>
        <location evidence="1">Cytoplasm</location>
    </subcellularLocation>
</comment>
<comment type="miscellaneous">
    <text evidence="1">Few gyrases are as efficient as E.coli at forming negative supercoils. Not all organisms have 2 type II topoisomerases; in organisms with a single type II topoisomerase this enzyme also has to decatenate newly replicated chromosomes.</text>
</comment>
<comment type="similarity">
    <text evidence="1">Belongs to the type II topoisomerase GyrA/ParC subunit family.</text>
</comment>
<proteinExistence type="inferred from homology"/>
<accession>Q8NKW8</accession>
<keyword id="KW-0046">Antibiotic resistance</keyword>
<keyword id="KW-0067">ATP-binding</keyword>
<keyword id="KW-0963">Cytoplasm</keyword>
<keyword id="KW-0238">DNA-binding</keyword>
<keyword id="KW-0413">Isomerase</keyword>
<keyword id="KW-0547">Nucleotide-binding</keyword>
<keyword id="KW-0799">Topoisomerase</keyword>
<organism>
    <name type="scientific">Staphylococcus aureus (strain MW2)</name>
    <dbReference type="NCBI Taxonomy" id="196620"/>
    <lineage>
        <taxon>Bacteria</taxon>
        <taxon>Bacillati</taxon>
        <taxon>Bacillota</taxon>
        <taxon>Bacilli</taxon>
        <taxon>Bacillales</taxon>
        <taxon>Staphylococcaceae</taxon>
        <taxon>Staphylococcus</taxon>
    </lineage>
</organism>